<sequence>MEKNMKFPVVDLSKLNGEERDQTMALINEACENWGFFEIVNHGLPHDLMDKIEKMTKDHYKTCQEQKFNDMLKSKGLDNLETEVEDVDWESTFYVRHLPQSNLNDISDVSDEYRTAMKDFGKRLENLAEDLLDLLCENLGLEKGYLKKVFHGTKGPTFGTKVSNYPPCPKPEMIKGLRAHTDAGGIILLFQDDKVSGLQLLKDGDWIDVPPLNHSIVINLGDQLEVITNGKYKSVLHRVVTQQEGNRMSVASFYNPGSDAEISPATSLVEKDSEYPSFVFDDYMKLYAGVKFQPKEPRFAAMKNASAVTELNPTAAVETF</sequence>
<evidence type="ECO:0000255" key="1"/>
<evidence type="ECO:0000255" key="2">
    <source>
        <dbReference type="PROSITE-ProRule" id="PRU00805"/>
    </source>
</evidence>
<evidence type="ECO:0000269" key="3">
    <source>
    </source>
</evidence>
<evidence type="ECO:0000269" key="4">
    <source>
    </source>
</evidence>
<evidence type="ECO:0000269" key="5">
    <source>
    </source>
</evidence>
<evidence type="ECO:0000269" key="6">
    <source>
    </source>
</evidence>
<evidence type="ECO:0000269" key="7">
    <source>
    </source>
</evidence>
<evidence type="ECO:0000269" key="8">
    <source>
    </source>
</evidence>
<evidence type="ECO:0000269" key="9">
    <source>
    </source>
</evidence>
<evidence type="ECO:0000269" key="10">
    <source>
    </source>
</evidence>
<evidence type="ECO:0000269" key="11">
    <source>
    </source>
</evidence>
<evidence type="ECO:0000269" key="12">
    <source>
    </source>
</evidence>
<evidence type="ECO:0000305" key="13"/>
<evidence type="ECO:0007829" key="14">
    <source>
        <dbReference type="PDB" id="5GJ9"/>
    </source>
</evidence>
<evidence type="ECO:0007829" key="15">
    <source>
        <dbReference type="PDB" id="5GJA"/>
    </source>
</evidence>
<accession>Q41931</accession>
<accession>O81093</accession>
<accession>Q7DLM8</accession>
<organism>
    <name type="scientific">Arabidopsis thaliana</name>
    <name type="common">Mouse-ear cress</name>
    <dbReference type="NCBI Taxonomy" id="3702"/>
    <lineage>
        <taxon>Eukaryota</taxon>
        <taxon>Viridiplantae</taxon>
        <taxon>Streptophyta</taxon>
        <taxon>Embryophyta</taxon>
        <taxon>Tracheophyta</taxon>
        <taxon>Spermatophyta</taxon>
        <taxon>Magnoliopsida</taxon>
        <taxon>eudicotyledons</taxon>
        <taxon>Gunneridae</taxon>
        <taxon>Pentapetalae</taxon>
        <taxon>rosids</taxon>
        <taxon>malvids</taxon>
        <taxon>Brassicales</taxon>
        <taxon>Brassicaceae</taxon>
        <taxon>Camelineae</taxon>
        <taxon>Arabidopsis</taxon>
    </lineage>
</organism>
<keyword id="KW-0002">3D-structure</keyword>
<keyword id="KW-0175">Coiled coil</keyword>
<keyword id="KW-0186">Copper</keyword>
<keyword id="KW-0266">Ethylene biosynthesis</keyword>
<keyword id="KW-0408">Iron</keyword>
<keyword id="KW-0479">Metal-binding</keyword>
<keyword id="KW-0560">Oxidoreductase</keyword>
<keyword id="KW-0611">Plant defense</keyword>
<keyword id="KW-1185">Reference proteome</keyword>
<keyword id="KW-0847">Vitamin C</keyword>
<proteinExistence type="evidence at protein level"/>
<feature type="chain" id="PRO_0000408298" description="1-aminocyclopropane-1-carboxylate oxidase 2">
    <location>
        <begin position="1"/>
        <end position="320"/>
    </location>
</feature>
<feature type="domain" description="Fe2OG dioxygenase" evidence="2">
    <location>
        <begin position="156"/>
        <end position="256"/>
    </location>
</feature>
<feature type="coiled-coil region" evidence="1">
    <location>
        <begin position="111"/>
        <end position="143"/>
    </location>
</feature>
<feature type="binding site" evidence="2">
    <location>
        <position position="180"/>
    </location>
    <ligand>
        <name>Fe cation</name>
        <dbReference type="ChEBI" id="CHEBI:24875"/>
    </ligand>
</feature>
<feature type="binding site" evidence="2">
    <location>
        <position position="182"/>
    </location>
    <ligand>
        <name>Fe cation</name>
        <dbReference type="ChEBI" id="CHEBI:24875"/>
    </ligand>
</feature>
<feature type="binding site" evidence="2">
    <location>
        <position position="237"/>
    </location>
    <ligand>
        <name>Fe cation</name>
        <dbReference type="ChEBI" id="CHEBI:24875"/>
    </ligand>
</feature>
<feature type="binding site" evidence="2">
    <location>
        <position position="247"/>
    </location>
    <ligand>
        <name>2-oxoglutarate</name>
        <dbReference type="ChEBI" id="CHEBI:16810"/>
    </ligand>
</feature>
<feature type="sequence conflict" description="In Ref. 1; AAC27484." evidence="13" ref="1">
    <original>E</original>
    <variation>D</variation>
    <location>
        <position position="261"/>
    </location>
</feature>
<feature type="strand" evidence="14">
    <location>
        <begin position="9"/>
        <end position="11"/>
    </location>
</feature>
<feature type="helix" evidence="14">
    <location>
        <begin position="12"/>
        <end position="15"/>
    </location>
</feature>
<feature type="helix" evidence="14">
    <location>
        <begin position="20"/>
        <end position="33"/>
    </location>
</feature>
<feature type="strand" evidence="14">
    <location>
        <begin position="35"/>
        <end position="41"/>
    </location>
</feature>
<feature type="helix" evidence="14">
    <location>
        <begin position="46"/>
        <end position="62"/>
    </location>
</feature>
<feature type="helix" evidence="14">
    <location>
        <begin position="64"/>
        <end position="74"/>
    </location>
</feature>
<feature type="turn" evidence="14">
    <location>
        <begin position="75"/>
        <end position="78"/>
    </location>
</feature>
<feature type="strand" evidence="15">
    <location>
        <begin position="84"/>
        <end position="86"/>
    </location>
</feature>
<feature type="strand" evidence="14">
    <location>
        <begin position="91"/>
        <end position="100"/>
    </location>
</feature>
<feature type="helix" evidence="14">
    <location>
        <begin position="103"/>
        <end position="105"/>
    </location>
</feature>
<feature type="helix" evidence="14">
    <location>
        <begin position="111"/>
        <end position="139"/>
    </location>
</feature>
<feature type="helix" evidence="14">
    <location>
        <begin position="145"/>
        <end position="151"/>
    </location>
</feature>
<feature type="turn" evidence="14">
    <location>
        <begin position="152"/>
        <end position="154"/>
    </location>
</feature>
<feature type="strand" evidence="14">
    <location>
        <begin position="157"/>
        <end position="165"/>
    </location>
</feature>
<feature type="helix" evidence="14">
    <location>
        <begin position="171"/>
        <end position="173"/>
    </location>
</feature>
<feature type="strand" evidence="14">
    <location>
        <begin position="176"/>
        <end position="180"/>
    </location>
</feature>
<feature type="strand" evidence="14">
    <location>
        <begin position="183"/>
        <end position="191"/>
    </location>
</feature>
<feature type="strand" evidence="14">
    <location>
        <begin position="198"/>
        <end position="202"/>
    </location>
</feature>
<feature type="strand" evidence="14">
    <location>
        <begin position="205"/>
        <end position="208"/>
    </location>
</feature>
<feature type="strand" evidence="14">
    <location>
        <begin position="216"/>
        <end position="220"/>
    </location>
</feature>
<feature type="helix" evidence="14">
    <location>
        <begin position="222"/>
        <end position="227"/>
    </location>
</feature>
<feature type="turn" evidence="14">
    <location>
        <begin position="228"/>
        <end position="230"/>
    </location>
</feature>
<feature type="strand" evidence="14">
    <location>
        <begin position="237"/>
        <end position="239"/>
    </location>
</feature>
<feature type="strand" evidence="14">
    <location>
        <begin position="247"/>
        <end position="255"/>
    </location>
</feature>
<feature type="helix" evidence="14">
    <location>
        <begin position="266"/>
        <end position="268"/>
    </location>
</feature>
<feature type="helix" evidence="14">
    <location>
        <begin position="280"/>
        <end position="290"/>
    </location>
</feature>
<feature type="helix" evidence="14">
    <location>
        <begin position="296"/>
        <end position="301"/>
    </location>
</feature>
<dbReference type="EC" id="1.14.17.4"/>
<dbReference type="EMBL" id="AF016100">
    <property type="protein sequence ID" value="AAC27484.1"/>
    <property type="molecule type" value="mRNA"/>
</dbReference>
<dbReference type="EMBL" id="AC003113">
    <property type="protein sequence ID" value="AAF70838.1"/>
    <property type="molecule type" value="Genomic_DNA"/>
</dbReference>
<dbReference type="EMBL" id="CP002684">
    <property type="protein sequence ID" value="AEE33960.1"/>
    <property type="molecule type" value="Genomic_DNA"/>
</dbReference>
<dbReference type="EMBL" id="AY045876">
    <property type="protein sequence ID" value="AAK76550.1"/>
    <property type="molecule type" value="mRNA"/>
</dbReference>
<dbReference type="EMBL" id="AY062685">
    <property type="protein sequence ID" value="AAL32763.1"/>
    <property type="molecule type" value="mRNA"/>
</dbReference>
<dbReference type="EMBL" id="AY093381">
    <property type="protein sequence ID" value="AAM13380.1"/>
    <property type="molecule type" value="mRNA"/>
</dbReference>
<dbReference type="EMBL" id="AY133851">
    <property type="protein sequence ID" value="AAM91785.1"/>
    <property type="molecule type" value="mRNA"/>
</dbReference>
<dbReference type="EMBL" id="AK230351">
    <property type="protein sequence ID" value="BAF02150.1"/>
    <property type="molecule type" value="mRNA"/>
</dbReference>
<dbReference type="EMBL" id="Z17775">
    <property type="protein sequence ID" value="CAA79062.1"/>
    <property type="molecule type" value="mRNA"/>
</dbReference>
<dbReference type="PIR" id="T01448">
    <property type="entry name" value="T01448"/>
</dbReference>
<dbReference type="PIR" id="T52267">
    <property type="entry name" value="T52267"/>
</dbReference>
<dbReference type="RefSeq" id="NP_176428.1">
    <property type="nucleotide sequence ID" value="NM_104918.5"/>
</dbReference>
<dbReference type="PDB" id="5GJ9">
    <property type="method" value="X-ray"/>
    <property type="resolution" value="2.10 A"/>
    <property type="chains" value="A/B=1-303"/>
</dbReference>
<dbReference type="PDB" id="5GJA">
    <property type="method" value="X-ray"/>
    <property type="resolution" value="2.10 A"/>
    <property type="chains" value="A/B/C/D/E/F/G/H=1-303"/>
</dbReference>
<dbReference type="PDBsum" id="5GJ9"/>
<dbReference type="PDBsum" id="5GJA"/>
<dbReference type="SMR" id="Q41931"/>
<dbReference type="BioGRID" id="27757">
    <property type="interactions" value="2"/>
</dbReference>
<dbReference type="FunCoup" id="Q41931">
    <property type="interactions" value="124"/>
</dbReference>
<dbReference type="IntAct" id="Q41931">
    <property type="interactions" value="1"/>
</dbReference>
<dbReference type="STRING" id="3702.Q41931"/>
<dbReference type="iPTMnet" id="Q41931"/>
<dbReference type="MetOSite" id="Q41931"/>
<dbReference type="SwissPalm" id="Q41931"/>
<dbReference type="PaxDb" id="3702-AT1G62380.1"/>
<dbReference type="ProteomicsDB" id="244377"/>
<dbReference type="EnsemblPlants" id="AT1G62380.1">
    <property type="protein sequence ID" value="AT1G62380.1"/>
    <property type="gene ID" value="AT1G62380"/>
</dbReference>
<dbReference type="GeneID" id="842536"/>
<dbReference type="Gramene" id="AT1G62380.1">
    <property type="protein sequence ID" value="AT1G62380.1"/>
    <property type="gene ID" value="AT1G62380"/>
</dbReference>
<dbReference type="KEGG" id="ath:AT1G62380"/>
<dbReference type="Araport" id="AT1G62380"/>
<dbReference type="TAIR" id="AT1G62380">
    <property type="gene designation" value="ACO2"/>
</dbReference>
<dbReference type="eggNOG" id="KOG0143">
    <property type="taxonomic scope" value="Eukaryota"/>
</dbReference>
<dbReference type="HOGENOM" id="CLU_010119_16_1_1"/>
<dbReference type="InParanoid" id="Q41931"/>
<dbReference type="OMA" id="CPGPEMI"/>
<dbReference type="PhylomeDB" id="Q41931"/>
<dbReference type="UniPathway" id="UPA00384">
    <property type="reaction ID" value="UER00563"/>
</dbReference>
<dbReference type="CD-CODE" id="4299E36E">
    <property type="entry name" value="Nucleolus"/>
</dbReference>
<dbReference type="PRO" id="PR:Q41931"/>
<dbReference type="Proteomes" id="UP000006548">
    <property type="component" value="Chromosome 1"/>
</dbReference>
<dbReference type="ExpressionAtlas" id="Q41931">
    <property type="expression patterns" value="baseline and differential"/>
</dbReference>
<dbReference type="GO" id="GO:0005829">
    <property type="term" value="C:cytosol"/>
    <property type="evidence" value="ECO:0007005"/>
    <property type="project" value="TAIR"/>
</dbReference>
<dbReference type="GO" id="GO:0005783">
    <property type="term" value="C:endoplasmic reticulum"/>
    <property type="evidence" value="ECO:0000314"/>
    <property type="project" value="TAIR"/>
</dbReference>
<dbReference type="GO" id="GO:0005794">
    <property type="term" value="C:Golgi apparatus"/>
    <property type="evidence" value="ECO:0000314"/>
    <property type="project" value="TAIR"/>
</dbReference>
<dbReference type="GO" id="GO:0005634">
    <property type="term" value="C:nucleus"/>
    <property type="evidence" value="ECO:0007005"/>
    <property type="project" value="TAIR"/>
</dbReference>
<dbReference type="GO" id="GO:0009505">
    <property type="term" value="C:plant-type cell wall"/>
    <property type="evidence" value="ECO:0007005"/>
    <property type="project" value="TAIR"/>
</dbReference>
<dbReference type="GO" id="GO:0005886">
    <property type="term" value="C:plasma membrane"/>
    <property type="evidence" value="ECO:0007005"/>
    <property type="project" value="TAIR"/>
</dbReference>
<dbReference type="GO" id="GO:0009506">
    <property type="term" value="C:plasmodesma"/>
    <property type="evidence" value="ECO:0007005"/>
    <property type="project" value="TAIR"/>
</dbReference>
<dbReference type="GO" id="GO:0009815">
    <property type="term" value="F:1-aminocyclopropane-1-carboxylate oxidase activity"/>
    <property type="evidence" value="ECO:0000250"/>
    <property type="project" value="TAIR"/>
</dbReference>
<dbReference type="GO" id="GO:0005507">
    <property type="term" value="F:copper ion binding"/>
    <property type="evidence" value="ECO:0007005"/>
    <property type="project" value="TAIR"/>
</dbReference>
<dbReference type="GO" id="GO:0031418">
    <property type="term" value="F:L-ascorbic acid binding"/>
    <property type="evidence" value="ECO:0007669"/>
    <property type="project" value="UniProtKB-KW"/>
</dbReference>
<dbReference type="GO" id="GO:0071398">
    <property type="term" value="P:cellular response to fatty acid"/>
    <property type="evidence" value="ECO:0000270"/>
    <property type="project" value="UniProtKB"/>
</dbReference>
<dbReference type="GO" id="GO:0071732">
    <property type="term" value="P:cellular response to nitric oxide"/>
    <property type="evidence" value="ECO:0000270"/>
    <property type="project" value="UniProtKB"/>
</dbReference>
<dbReference type="GO" id="GO:0006952">
    <property type="term" value="P:defense response"/>
    <property type="evidence" value="ECO:0007669"/>
    <property type="project" value="UniProtKB-KW"/>
</dbReference>
<dbReference type="GO" id="GO:0009727">
    <property type="term" value="P:detection of ethylene stimulus"/>
    <property type="evidence" value="ECO:0000314"/>
    <property type="project" value="TAIR"/>
</dbReference>
<dbReference type="GO" id="GO:0009693">
    <property type="term" value="P:ethylene biosynthetic process"/>
    <property type="evidence" value="ECO:0000304"/>
    <property type="project" value="TAIR"/>
</dbReference>
<dbReference type="GO" id="GO:0010030">
    <property type="term" value="P:positive regulation of seed germination"/>
    <property type="evidence" value="ECO:0000315"/>
    <property type="project" value="UniProtKB"/>
</dbReference>
<dbReference type="FunFam" id="2.60.120.330:FF:000002">
    <property type="entry name" value="1-aminocyclopropane-1-carboxylate oxidase 1"/>
    <property type="match status" value="1"/>
</dbReference>
<dbReference type="Gene3D" id="2.60.120.330">
    <property type="entry name" value="B-lactam Antibiotic, Isopenicillin N Synthase, Chain"/>
    <property type="match status" value="1"/>
</dbReference>
<dbReference type="InterPro" id="IPR026992">
    <property type="entry name" value="DIOX_N"/>
</dbReference>
<dbReference type="InterPro" id="IPR044861">
    <property type="entry name" value="IPNS-like_FE2OG_OXY"/>
</dbReference>
<dbReference type="InterPro" id="IPR027443">
    <property type="entry name" value="IPNS-like_sf"/>
</dbReference>
<dbReference type="InterPro" id="IPR005123">
    <property type="entry name" value="Oxoglu/Fe-dep_dioxygenase_dom"/>
</dbReference>
<dbReference type="InterPro" id="IPR050295">
    <property type="entry name" value="Plant_2OG-oxidoreductases"/>
</dbReference>
<dbReference type="PANTHER" id="PTHR47991">
    <property type="entry name" value="OXOGLUTARATE/IRON-DEPENDENT DIOXYGENASE"/>
    <property type="match status" value="1"/>
</dbReference>
<dbReference type="Pfam" id="PF03171">
    <property type="entry name" value="2OG-FeII_Oxy"/>
    <property type="match status" value="1"/>
</dbReference>
<dbReference type="Pfam" id="PF14226">
    <property type="entry name" value="DIOX_N"/>
    <property type="match status" value="1"/>
</dbReference>
<dbReference type="SUPFAM" id="SSF51197">
    <property type="entry name" value="Clavaminate synthase-like"/>
    <property type="match status" value="1"/>
</dbReference>
<dbReference type="PROSITE" id="PS51471">
    <property type="entry name" value="FE2OG_OXY"/>
    <property type="match status" value="1"/>
</dbReference>
<comment type="function">
    <text evidence="8 10">Enzyme involved in the ethylene biosynthesis. Required to mediate the 1-aminocyclopropane-1-carboxylic acid (ACC)-mediated reversion of the ABA-induced inhibition of seed germination via endosperm rupture. May promote stem elongation by maximizing the extensibility cells, possibly by activating ethylene biosynthesis, in response to very-long-chain fatty acids (VLCFAs C20:0 to C30:0).</text>
</comment>
<comment type="catalytic activity">
    <reaction>
        <text>1-aminocyclopropane-1-carboxylate + L-ascorbate + O2 = ethene + L-dehydroascorbate + hydrogen cyanide + CO2 + 2 H2O</text>
        <dbReference type="Rhea" id="RHEA:23640"/>
        <dbReference type="ChEBI" id="CHEBI:15377"/>
        <dbReference type="ChEBI" id="CHEBI:15379"/>
        <dbReference type="ChEBI" id="CHEBI:16526"/>
        <dbReference type="ChEBI" id="CHEBI:18153"/>
        <dbReference type="ChEBI" id="CHEBI:18407"/>
        <dbReference type="ChEBI" id="CHEBI:38290"/>
        <dbReference type="ChEBI" id="CHEBI:58360"/>
        <dbReference type="ChEBI" id="CHEBI:58539"/>
        <dbReference type="EC" id="1.14.17.4"/>
    </reaction>
</comment>
<comment type="cofactor">
    <cofactor evidence="2 9">
        <name>Fe(2+)</name>
        <dbReference type="ChEBI" id="CHEBI:29033"/>
    </cofactor>
    <cofactor evidence="2 9">
        <name>Cu(2+)</name>
        <dbReference type="ChEBI" id="CHEBI:29036"/>
    </cofactor>
    <text evidence="2 9">Binds 1 Fe(2+) ion per subunit. Can also bind Cu(2+) ions.</text>
</comment>
<comment type="pathway">
    <text>Alkene biosynthesis; ethylene biosynthesis via S-adenosyl-L-methionine; ethylene from S-adenosyl-L-methionine: step 2/2.</text>
</comment>
<comment type="tissue specificity">
    <text evidence="3 4 8">Expressed in vegetative tissues. Constitutively expressed in leaves and blades. In ethylene exposed etiolated seedlings, localized in cells at the outer side of the exaggerated hook in an ethylene-dependent manner and following an ethylene sensitive pattern. Also detected in the root tip when treated by ethylene.</text>
</comment>
<comment type="induction">
    <text evidence="3 5 6 7 8 11 12">Upon iron deprivation. Induced by ethylene, particularly in root tips and hooks of ethiolated seedlings. Promoted by ozone O(3). Accumulates in response to very-long-chain fatty acids (VLCFAs C20:0 to C30:0). Induced in roots by nitric oxide (NO).</text>
</comment>
<comment type="disruption phenotype">
    <text evidence="10">Impaired in the 1-aminocyclopropane-1-carboxylic acid (ACC)-mediated reversion of the ABA-induced inhibition of seed germination.</text>
</comment>
<comment type="similarity">
    <text evidence="13">Belongs to the iron/ascorbate-dependent oxidoreductase family.</text>
</comment>
<protein>
    <recommendedName>
        <fullName>1-aminocyclopropane-1-carboxylate oxidase 2</fullName>
        <shortName>ACC oxidase 2</shortName>
        <shortName>AtACO2</shortName>
        <ecNumber>1.14.17.4</ecNumber>
    </recommendedName>
</protein>
<reference key="1">
    <citation type="journal article" date="1999" name="Development">
        <title>Regulation of differential growth in the apical hook of Arabidopsis.</title>
        <authorList>
            <person name="Raz V."/>
            <person name="Ecker J.R."/>
        </authorList>
    </citation>
    <scope>NUCLEOTIDE SEQUENCE [MRNA]</scope>
    <scope>TISSUE SPECIFICITY</scope>
    <scope>INDUCTION BY ETHYLENE</scope>
    <source>
        <strain>cv. Columbia</strain>
    </source>
</reference>
<reference key="2">
    <citation type="journal article" date="2000" name="Nature">
        <title>Sequence and analysis of chromosome 1 of the plant Arabidopsis thaliana.</title>
        <authorList>
            <person name="Theologis A."/>
            <person name="Ecker J.R."/>
            <person name="Palm C.J."/>
            <person name="Federspiel N.A."/>
            <person name="Kaul S."/>
            <person name="White O."/>
            <person name="Alonso J."/>
            <person name="Altafi H."/>
            <person name="Araujo R."/>
            <person name="Bowman C.L."/>
            <person name="Brooks S.Y."/>
            <person name="Buehler E."/>
            <person name="Chan A."/>
            <person name="Chao Q."/>
            <person name="Chen H."/>
            <person name="Cheuk R.F."/>
            <person name="Chin C.W."/>
            <person name="Chung M.K."/>
            <person name="Conn L."/>
            <person name="Conway A.B."/>
            <person name="Conway A.R."/>
            <person name="Creasy T.H."/>
            <person name="Dewar K."/>
            <person name="Dunn P."/>
            <person name="Etgu P."/>
            <person name="Feldblyum T.V."/>
            <person name="Feng J.-D."/>
            <person name="Fong B."/>
            <person name="Fujii C.Y."/>
            <person name="Gill J.E."/>
            <person name="Goldsmith A.D."/>
            <person name="Haas B."/>
            <person name="Hansen N.F."/>
            <person name="Hughes B."/>
            <person name="Huizar L."/>
            <person name="Hunter J.L."/>
            <person name="Jenkins J."/>
            <person name="Johnson-Hopson C."/>
            <person name="Khan S."/>
            <person name="Khaykin E."/>
            <person name="Kim C.J."/>
            <person name="Koo H.L."/>
            <person name="Kremenetskaia I."/>
            <person name="Kurtz D.B."/>
            <person name="Kwan A."/>
            <person name="Lam B."/>
            <person name="Langin-Hooper S."/>
            <person name="Lee A."/>
            <person name="Lee J.M."/>
            <person name="Lenz C.A."/>
            <person name="Li J.H."/>
            <person name="Li Y.-P."/>
            <person name="Lin X."/>
            <person name="Liu S.X."/>
            <person name="Liu Z.A."/>
            <person name="Luros J.S."/>
            <person name="Maiti R."/>
            <person name="Marziali A."/>
            <person name="Militscher J."/>
            <person name="Miranda M."/>
            <person name="Nguyen M."/>
            <person name="Nierman W.C."/>
            <person name="Osborne B.I."/>
            <person name="Pai G."/>
            <person name="Peterson J."/>
            <person name="Pham P.K."/>
            <person name="Rizzo M."/>
            <person name="Rooney T."/>
            <person name="Rowley D."/>
            <person name="Sakano H."/>
            <person name="Salzberg S.L."/>
            <person name="Schwartz J.R."/>
            <person name="Shinn P."/>
            <person name="Southwick A.M."/>
            <person name="Sun H."/>
            <person name="Tallon L.J."/>
            <person name="Tambunga G."/>
            <person name="Toriumi M.J."/>
            <person name="Town C.D."/>
            <person name="Utterback T."/>
            <person name="Van Aken S."/>
            <person name="Vaysberg M."/>
            <person name="Vysotskaia V.S."/>
            <person name="Walker M."/>
            <person name="Wu D."/>
            <person name="Yu G."/>
            <person name="Fraser C.M."/>
            <person name="Venter J.C."/>
            <person name="Davis R.W."/>
        </authorList>
    </citation>
    <scope>NUCLEOTIDE SEQUENCE [LARGE SCALE GENOMIC DNA]</scope>
    <source>
        <strain>cv. Columbia</strain>
    </source>
</reference>
<reference key="3">
    <citation type="journal article" date="2017" name="Plant J.">
        <title>Araport11: a complete reannotation of the Arabidopsis thaliana reference genome.</title>
        <authorList>
            <person name="Cheng C.Y."/>
            <person name="Krishnakumar V."/>
            <person name="Chan A.P."/>
            <person name="Thibaud-Nissen F."/>
            <person name="Schobel S."/>
            <person name="Town C.D."/>
        </authorList>
    </citation>
    <scope>GENOME REANNOTATION</scope>
    <source>
        <strain>cv. Columbia</strain>
    </source>
</reference>
<reference key="4">
    <citation type="journal article" date="2003" name="Science">
        <title>Empirical analysis of transcriptional activity in the Arabidopsis genome.</title>
        <authorList>
            <person name="Yamada K."/>
            <person name="Lim J."/>
            <person name="Dale J.M."/>
            <person name="Chen H."/>
            <person name="Shinn P."/>
            <person name="Palm C.J."/>
            <person name="Southwick A.M."/>
            <person name="Wu H.C."/>
            <person name="Kim C.J."/>
            <person name="Nguyen M."/>
            <person name="Pham P.K."/>
            <person name="Cheuk R.F."/>
            <person name="Karlin-Newmann G."/>
            <person name="Liu S.X."/>
            <person name="Lam B."/>
            <person name="Sakano H."/>
            <person name="Wu T."/>
            <person name="Yu G."/>
            <person name="Miranda M."/>
            <person name="Quach H.L."/>
            <person name="Tripp M."/>
            <person name="Chang C.H."/>
            <person name="Lee J.M."/>
            <person name="Toriumi M.J."/>
            <person name="Chan M.M."/>
            <person name="Tang C.C."/>
            <person name="Onodera C.S."/>
            <person name="Deng J.M."/>
            <person name="Akiyama K."/>
            <person name="Ansari Y."/>
            <person name="Arakawa T."/>
            <person name="Banh J."/>
            <person name="Banno F."/>
            <person name="Bowser L."/>
            <person name="Brooks S.Y."/>
            <person name="Carninci P."/>
            <person name="Chao Q."/>
            <person name="Choy N."/>
            <person name="Enju A."/>
            <person name="Goldsmith A.D."/>
            <person name="Gurjal M."/>
            <person name="Hansen N.F."/>
            <person name="Hayashizaki Y."/>
            <person name="Johnson-Hopson C."/>
            <person name="Hsuan V.W."/>
            <person name="Iida K."/>
            <person name="Karnes M."/>
            <person name="Khan S."/>
            <person name="Koesema E."/>
            <person name="Ishida J."/>
            <person name="Jiang P.X."/>
            <person name="Jones T."/>
            <person name="Kawai J."/>
            <person name="Kamiya A."/>
            <person name="Meyers C."/>
            <person name="Nakajima M."/>
            <person name="Narusaka M."/>
            <person name="Seki M."/>
            <person name="Sakurai T."/>
            <person name="Satou M."/>
            <person name="Tamse R."/>
            <person name="Vaysberg M."/>
            <person name="Wallender E.K."/>
            <person name="Wong C."/>
            <person name="Yamamura Y."/>
            <person name="Yuan S."/>
            <person name="Shinozaki K."/>
            <person name="Davis R.W."/>
            <person name="Theologis A."/>
            <person name="Ecker J.R."/>
        </authorList>
    </citation>
    <scope>NUCLEOTIDE SEQUENCE [LARGE SCALE MRNA]</scope>
    <source>
        <strain>cv. Columbia</strain>
    </source>
</reference>
<reference key="5">
    <citation type="submission" date="2006-07" db="EMBL/GenBank/DDBJ databases">
        <title>Large-scale analysis of RIKEN Arabidopsis full-length (RAFL) cDNAs.</title>
        <authorList>
            <person name="Totoki Y."/>
            <person name="Seki M."/>
            <person name="Ishida J."/>
            <person name="Nakajima M."/>
            <person name="Enju A."/>
            <person name="Kamiya A."/>
            <person name="Narusaka M."/>
            <person name="Shin-i T."/>
            <person name="Nakagawa M."/>
            <person name="Sakamoto N."/>
            <person name="Oishi K."/>
            <person name="Kohara Y."/>
            <person name="Kobayashi M."/>
            <person name="Toyoda A."/>
            <person name="Sakaki Y."/>
            <person name="Sakurai T."/>
            <person name="Iida K."/>
            <person name="Akiyama K."/>
            <person name="Satou M."/>
            <person name="Toyoda T."/>
            <person name="Konagaya A."/>
            <person name="Carninci P."/>
            <person name="Kawai J."/>
            <person name="Hayashizaki Y."/>
            <person name="Shinozaki K."/>
        </authorList>
    </citation>
    <scope>NUCLEOTIDE SEQUENCE [LARGE SCALE MRNA]</scope>
    <source>
        <strain>cv. Columbia</strain>
    </source>
</reference>
<reference key="6">
    <citation type="submission" date="1992-11" db="EMBL/GenBank/DDBJ databases">
        <title>The Arabidopsis thaliana transcribed genome: the GDR cDNA program.</title>
        <authorList>
            <person name="Raynal M."/>
            <person name="Grellet F."/>
            <person name="Laudie M."/>
            <person name="Meyer Y."/>
            <person name="Cooke R."/>
            <person name="Delseny M."/>
        </authorList>
    </citation>
    <scope>NUCLEOTIDE SEQUENCE [LARGE SCALE MRNA] OF 230-320</scope>
    <source>
        <strain>cv. Columbia</strain>
        <tissue>Green siliques</tissue>
    </source>
</reference>
<reference key="7">
    <citation type="journal article" date="2003" name="Plant Physiol.">
        <title>Ethylene and auxin control the Arabidopsis response to decreased light intensity.</title>
        <authorList>
            <person name="Vandenbussche F."/>
            <person name="Vriezen W.H."/>
            <person name="Smalle J."/>
            <person name="Laarhoven L.J.J."/>
            <person name="Harren F.J.M."/>
            <person name="Van Der Straeten D."/>
        </authorList>
    </citation>
    <scope>TISSUE SPECIFICITY</scope>
</reference>
<reference key="8">
    <citation type="journal article" date="2004" name="Plant J.">
        <title>Transcriptional profiling by cDNA-AFLP and microarray analysis reveals novel insights into the early response to ethylene in Arabidopsis.</title>
        <authorList>
            <person name="De Paepe A."/>
            <person name="Vuylsteke M."/>
            <person name="Van Hummelen P."/>
            <person name="Zabeau M."/>
            <person name="Van Der Straeten D."/>
        </authorList>
    </citation>
    <scope>INDUCTION BY ETHYLENE</scope>
    <source>
        <strain>cv. Columbia</strain>
    </source>
</reference>
<reference key="9">
    <citation type="journal article" date="2005" name="Plant Physiol.">
        <title>Ozone-induced programmed cell death in the Arabidopsis radical-induced cell death1 mutant.</title>
        <authorList>
            <person name="Overmyer K."/>
            <person name="Brosche M."/>
            <person name="Pellinen R."/>
            <person name="Kuittinen T."/>
            <person name="Tuominen H."/>
            <person name="Ahlfors R."/>
            <person name="Keinaenen M."/>
            <person name="Saarma M."/>
            <person name="Scheel D."/>
            <person name="Kangasjaervi J."/>
        </authorList>
    </citation>
    <scope>INDUCTION BY OZONE</scope>
    <source>
        <strain>cv. Columbia</strain>
    </source>
</reference>
<reference key="10">
    <citation type="journal article" date="2006" name="Proc. Natl. Acad. Sci. U.S.A.">
        <title>ETHYLENE-INSENSITIVE5 encodes a 5'--&gt;3' exoribonuclease required for regulation of the EIN3-targeting F-box proteins EBF1/2.</title>
        <authorList>
            <person name="Olmedo G."/>
            <person name="Guo H."/>
            <person name="Gregory B.D."/>
            <person name="Nourizadeh S.D."/>
            <person name="Aguilar-Henonin L."/>
            <person name="Li H."/>
            <person name="An F."/>
            <person name="Guzman P."/>
            <person name="Ecker J.R."/>
        </authorList>
    </citation>
    <scope>INDUCTION BY ETHYLENE</scope>
    <source>
        <strain>cv. Columbia</strain>
    </source>
</reference>
<reference key="11">
    <citation type="journal article" date="2007" name="Plant Cell">
        <title>Saturated very-long-chain fatty acids promote cotton fiber and Arabidopsis cell elongation by activating ethylene biosynthesis.</title>
        <authorList>
            <person name="Qin Y.-M."/>
            <person name="Hu C.-Y."/>
            <person name="Pang Y."/>
            <person name="Kastaniotis A.J."/>
            <person name="Hiltunen J.K."/>
            <person name="Zhu Y.-X."/>
        </authorList>
    </citation>
    <scope>FUNCTION</scope>
    <scope>INDUCTION BY VERY-LONG-CHAIN FATTY ACIDS</scope>
    <scope>TISSUE SPECIFICITY</scope>
    <source>
        <strain>cv. Columbia</strain>
    </source>
</reference>
<reference key="12">
    <citation type="journal article" date="2009" name="Plant Cell">
        <title>Ethylene interacts with abscisic acid to regulate endosperm rupture during germination: a comparative approach using Lepidium sativum and Arabidopsis thaliana.</title>
        <authorList>
            <person name="Linkies A."/>
            <person name="Mueller K."/>
            <person name="Morris K."/>
            <person name="Tureckova V."/>
            <person name="Wenk M."/>
            <person name="Cadman C.S.C."/>
            <person name="Corbineau F."/>
            <person name="Strnad M."/>
            <person name="Lynn J.R."/>
            <person name="Finch-Savage W.E."/>
            <person name="Leubner-Metzger G."/>
        </authorList>
    </citation>
    <scope>FUNCTION</scope>
    <scope>DISRUPTION PHENOTYPE</scope>
</reference>
<reference key="13">
    <citation type="journal article" date="2010" name="J. Exp. Bot.">
        <title>Ethylene and nitric oxide involvement in the up-regulation of key genes related to iron acquisition and homeostasis in Arabidopsis.</title>
        <authorList>
            <person name="Garcia M.J."/>
            <person name="Lucena C."/>
            <person name="Romera F.J."/>
            <person name="Alcantara E."/>
            <person name="Perez-Vicente R."/>
        </authorList>
    </citation>
    <scope>INDUCTION BY IRON DEFICIENCY</scope>
</reference>
<reference key="14">
    <citation type="journal article" date="2010" name="Plant Physiol.">
        <title>Divalent metal ions in plant mitochondria and their role in interactions with proteins and oxidative stress-induced damage to respiratory function.</title>
        <authorList>
            <person name="Tan Y.-F."/>
            <person name="O'Toole N."/>
            <person name="Taylor N.L."/>
            <person name="Millar A.H."/>
        </authorList>
    </citation>
    <scope>COFACTOR</scope>
</reference>
<reference key="15">
    <citation type="journal article" date="2011" name="Plant Physiol. Biochem.">
        <title>A new model involving ethylene, nitric oxide and Fe to explain the regulation of Fe-acquisition genes in Strategy I plants.</title>
        <authorList>
            <person name="Garcia M.J."/>
            <person name="Suarez V."/>
            <person name="Romera F.J."/>
            <person name="Alcantara E."/>
            <person name="Perez-Vicente R."/>
        </authorList>
    </citation>
    <scope>INDUCTION BY NITRIC OXIDE</scope>
</reference>
<gene>
    <name type="primary">ACO2</name>
    <name type="synonym">EI305</name>
    <name type="ordered locus">At1g62380</name>
    <name type="ORF">F24O1.10</name>
</gene>
<name>ACCO2_ARATH</name>